<sequence>MASRKEALARRASRVRRQIKAVANGRPRLSVHRSSKNIYAQIIDDVAGKTLASASTLEADLRSSLKTGADVAAAAVVGKLVAERGVKAGVKDVVFDRGAFIYHGRIKAVAEAAREGGLNF</sequence>
<reference key="1">
    <citation type="journal article" date="2001" name="Science">
        <title>The genome of the natural genetic engineer Agrobacterium tumefaciens C58.</title>
        <authorList>
            <person name="Wood D.W."/>
            <person name="Setubal J.C."/>
            <person name="Kaul R."/>
            <person name="Monks D.E."/>
            <person name="Kitajima J.P."/>
            <person name="Okura V.K."/>
            <person name="Zhou Y."/>
            <person name="Chen L."/>
            <person name="Wood G.E."/>
            <person name="Almeida N.F. Jr."/>
            <person name="Woo L."/>
            <person name="Chen Y."/>
            <person name="Paulsen I.T."/>
            <person name="Eisen J.A."/>
            <person name="Karp P.D."/>
            <person name="Bovee D. Sr."/>
            <person name="Chapman P."/>
            <person name="Clendenning J."/>
            <person name="Deatherage G."/>
            <person name="Gillet W."/>
            <person name="Grant C."/>
            <person name="Kutyavin T."/>
            <person name="Levy R."/>
            <person name="Li M.-J."/>
            <person name="McClelland E."/>
            <person name="Palmieri A."/>
            <person name="Raymond C."/>
            <person name="Rouse G."/>
            <person name="Saenphimmachak C."/>
            <person name="Wu Z."/>
            <person name="Romero P."/>
            <person name="Gordon D."/>
            <person name="Zhang S."/>
            <person name="Yoo H."/>
            <person name="Tao Y."/>
            <person name="Biddle P."/>
            <person name="Jung M."/>
            <person name="Krespan W."/>
            <person name="Perry M."/>
            <person name="Gordon-Kamm B."/>
            <person name="Liao L."/>
            <person name="Kim S."/>
            <person name="Hendrick C."/>
            <person name="Zhao Z.-Y."/>
            <person name="Dolan M."/>
            <person name="Chumley F."/>
            <person name="Tingey S.V."/>
            <person name="Tomb J.-F."/>
            <person name="Gordon M.P."/>
            <person name="Olson M.V."/>
            <person name="Nester E.W."/>
        </authorList>
    </citation>
    <scope>NUCLEOTIDE SEQUENCE [LARGE SCALE GENOMIC DNA]</scope>
    <source>
        <strain>C58 / ATCC 33970</strain>
    </source>
</reference>
<reference key="2">
    <citation type="journal article" date="2001" name="Science">
        <title>Genome sequence of the plant pathogen and biotechnology agent Agrobacterium tumefaciens C58.</title>
        <authorList>
            <person name="Goodner B."/>
            <person name="Hinkle G."/>
            <person name="Gattung S."/>
            <person name="Miller N."/>
            <person name="Blanchard M."/>
            <person name="Qurollo B."/>
            <person name="Goldman B.S."/>
            <person name="Cao Y."/>
            <person name="Askenazi M."/>
            <person name="Halling C."/>
            <person name="Mullin L."/>
            <person name="Houmiel K."/>
            <person name="Gordon J."/>
            <person name="Vaudin M."/>
            <person name="Iartchouk O."/>
            <person name="Epp A."/>
            <person name="Liu F."/>
            <person name="Wollam C."/>
            <person name="Allinger M."/>
            <person name="Doughty D."/>
            <person name="Scott C."/>
            <person name="Lappas C."/>
            <person name="Markelz B."/>
            <person name="Flanagan C."/>
            <person name="Crowell C."/>
            <person name="Gurson J."/>
            <person name="Lomo C."/>
            <person name="Sear C."/>
            <person name="Strub G."/>
            <person name="Cielo C."/>
            <person name="Slater S."/>
        </authorList>
    </citation>
    <scope>NUCLEOTIDE SEQUENCE [LARGE SCALE GENOMIC DNA]</scope>
    <source>
        <strain>C58 / ATCC 33970</strain>
    </source>
</reference>
<accession>Q8UE34</accession>
<accession>Q7CY81</accession>
<feature type="chain" id="PRO_0000131198" description="Large ribosomal subunit protein uL18">
    <location>
        <begin position="1"/>
        <end position="120"/>
    </location>
</feature>
<organism>
    <name type="scientific">Agrobacterium fabrum (strain C58 / ATCC 33970)</name>
    <name type="common">Agrobacterium tumefaciens (strain C58)</name>
    <dbReference type="NCBI Taxonomy" id="176299"/>
    <lineage>
        <taxon>Bacteria</taxon>
        <taxon>Pseudomonadati</taxon>
        <taxon>Pseudomonadota</taxon>
        <taxon>Alphaproteobacteria</taxon>
        <taxon>Hyphomicrobiales</taxon>
        <taxon>Rhizobiaceae</taxon>
        <taxon>Rhizobium/Agrobacterium group</taxon>
        <taxon>Agrobacterium</taxon>
        <taxon>Agrobacterium tumefaciens complex</taxon>
    </lineage>
</organism>
<name>RL18_AGRFC</name>
<proteinExistence type="inferred from homology"/>
<protein>
    <recommendedName>
        <fullName evidence="1">Large ribosomal subunit protein uL18</fullName>
    </recommendedName>
    <alternativeName>
        <fullName evidence="2">50S ribosomal protein L18</fullName>
    </alternativeName>
</protein>
<evidence type="ECO:0000255" key="1">
    <source>
        <dbReference type="HAMAP-Rule" id="MF_01337"/>
    </source>
</evidence>
<evidence type="ECO:0000305" key="2"/>
<dbReference type="EMBL" id="AE007869">
    <property type="protein sequence ID" value="AAK87693.1"/>
    <property type="molecule type" value="Genomic_DNA"/>
</dbReference>
<dbReference type="PIR" id="AH2813">
    <property type="entry name" value="AH2813"/>
</dbReference>
<dbReference type="PIR" id="D97592">
    <property type="entry name" value="D97592"/>
</dbReference>
<dbReference type="RefSeq" id="NP_354908.1">
    <property type="nucleotide sequence ID" value="NC_003062.2"/>
</dbReference>
<dbReference type="RefSeq" id="WP_006313980.1">
    <property type="nucleotide sequence ID" value="NC_003062.2"/>
</dbReference>
<dbReference type="SMR" id="Q8UE34"/>
<dbReference type="STRING" id="176299.Atu1930"/>
<dbReference type="EnsemblBacteria" id="AAK87693">
    <property type="protein sequence ID" value="AAK87693"/>
    <property type="gene ID" value="Atu1930"/>
</dbReference>
<dbReference type="GeneID" id="1133968"/>
<dbReference type="KEGG" id="atu:Atu1930"/>
<dbReference type="PATRIC" id="fig|176299.10.peg.1942"/>
<dbReference type="eggNOG" id="COG0256">
    <property type="taxonomic scope" value="Bacteria"/>
</dbReference>
<dbReference type="HOGENOM" id="CLU_098841_0_1_5"/>
<dbReference type="OrthoDB" id="9810939at2"/>
<dbReference type="PhylomeDB" id="Q8UE34"/>
<dbReference type="BioCyc" id="AGRO:ATU1930-MONOMER"/>
<dbReference type="Proteomes" id="UP000000813">
    <property type="component" value="Chromosome circular"/>
</dbReference>
<dbReference type="GO" id="GO:0022625">
    <property type="term" value="C:cytosolic large ribosomal subunit"/>
    <property type="evidence" value="ECO:0007669"/>
    <property type="project" value="TreeGrafter"/>
</dbReference>
<dbReference type="GO" id="GO:0008097">
    <property type="term" value="F:5S rRNA binding"/>
    <property type="evidence" value="ECO:0007669"/>
    <property type="project" value="TreeGrafter"/>
</dbReference>
<dbReference type="GO" id="GO:0003735">
    <property type="term" value="F:structural constituent of ribosome"/>
    <property type="evidence" value="ECO:0007669"/>
    <property type="project" value="InterPro"/>
</dbReference>
<dbReference type="GO" id="GO:0006412">
    <property type="term" value="P:translation"/>
    <property type="evidence" value="ECO:0007669"/>
    <property type="project" value="UniProtKB-UniRule"/>
</dbReference>
<dbReference type="CDD" id="cd00432">
    <property type="entry name" value="Ribosomal_L18_L5e"/>
    <property type="match status" value="1"/>
</dbReference>
<dbReference type="FunFam" id="3.30.420.100:FF:000001">
    <property type="entry name" value="50S ribosomal protein L18"/>
    <property type="match status" value="1"/>
</dbReference>
<dbReference type="Gene3D" id="3.30.420.100">
    <property type="match status" value="1"/>
</dbReference>
<dbReference type="HAMAP" id="MF_01337_B">
    <property type="entry name" value="Ribosomal_uL18_B"/>
    <property type="match status" value="1"/>
</dbReference>
<dbReference type="InterPro" id="IPR004389">
    <property type="entry name" value="Ribosomal_uL18_bac-type"/>
</dbReference>
<dbReference type="InterPro" id="IPR005484">
    <property type="entry name" value="Ribosomal_uL18_bac/euk"/>
</dbReference>
<dbReference type="NCBIfam" id="TIGR00060">
    <property type="entry name" value="L18_bact"/>
    <property type="match status" value="1"/>
</dbReference>
<dbReference type="PANTHER" id="PTHR12899">
    <property type="entry name" value="39S RIBOSOMAL PROTEIN L18, MITOCHONDRIAL"/>
    <property type="match status" value="1"/>
</dbReference>
<dbReference type="PANTHER" id="PTHR12899:SF3">
    <property type="entry name" value="LARGE RIBOSOMAL SUBUNIT PROTEIN UL18M"/>
    <property type="match status" value="1"/>
</dbReference>
<dbReference type="Pfam" id="PF00861">
    <property type="entry name" value="Ribosomal_L18p"/>
    <property type="match status" value="1"/>
</dbReference>
<dbReference type="SUPFAM" id="SSF53137">
    <property type="entry name" value="Translational machinery components"/>
    <property type="match status" value="1"/>
</dbReference>
<gene>
    <name evidence="1" type="primary">rplR</name>
    <name type="ordered locus">Atu1930</name>
    <name type="ORF">AGR_C_3531</name>
</gene>
<keyword id="KW-1185">Reference proteome</keyword>
<keyword id="KW-0687">Ribonucleoprotein</keyword>
<keyword id="KW-0689">Ribosomal protein</keyword>
<keyword id="KW-0694">RNA-binding</keyword>
<keyword id="KW-0699">rRNA-binding</keyword>
<comment type="function">
    <text evidence="1">This is one of the proteins that bind and probably mediate the attachment of the 5S RNA into the large ribosomal subunit, where it forms part of the central protuberance.</text>
</comment>
<comment type="subunit">
    <text evidence="1">Part of the 50S ribosomal subunit; part of the 5S rRNA/L5/L18/L25 subcomplex. Contacts the 5S and 23S rRNAs.</text>
</comment>
<comment type="similarity">
    <text evidence="1">Belongs to the universal ribosomal protein uL18 family.</text>
</comment>